<comment type="function">
    <text evidence="1">Catalyzes the last two sequential reactions in the de novo biosynthetic pathway for UDP-N-acetylglucosamine (UDP-GlcNAc). The C-terminal domain catalyzes the transfer of acetyl group from acetyl coenzyme A to glucosamine-1-phosphate (GlcN-1-P) to produce N-acetylglucosamine-1-phosphate (GlcNAc-1-P), which is converted into UDP-GlcNAc by the transfer of uridine 5-monophosphate (from uridine 5-triphosphate), a reaction catalyzed by the N-terminal domain.</text>
</comment>
<comment type="catalytic activity">
    <reaction evidence="1">
        <text>alpha-D-glucosamine 1-phosphate + acetyl-CoA = N-acetyl-alpha-D-glucosamine 1-phosphate + CoA + H(+)</text>
        <dbReference type="Rhea" id="RHEA:13725"/>
        <dbReference type="ChEBI" id="CHEBI:15378"/>
        <dbReference type="ChEBI" id="CHEBI:57287"/>
        <dbReference type="ChEBI" id="CHEBI:57288"/>
        <dbReference type="ChEBI" id="CHEBI:57776"/>
        <dbReference type="ChEBI" id="CHEBI:58516"/>
        <dbReference type="EC" id="2.3.1.157"/>
    </reaction>
</comment>
<comment type="catalytic activity">
    <reaction evidence="1">
        <text>N-acetyl-alpha-D-glucosamine 1-phosphate + UTP + H(+) = UDP-N-acetyl-alpha-D-glucosamine + diphosphate</text>
        <dbReference type="Rhea" id="RHEA:13509"/>
        <dbReference type="ChEBI" id="CHEBI:15378"/>
        <dbReference type="ChEBI" id="CHEBI:33019"/>
        <dbReference type="ChEBI" id="CHEBI:46398"/>
        <dbReference type="ChEBI" id="CHEBI:57705"/>
        <dbReference type="ChEBI" id="CHEBI:57776"/>
        <dbReference type="EC" id="2.7.7.23"/>
    </reaction>
</comment>
<comment type="cofactor">
    <cofactor evidence="1">
        <name>Mg(2+)</name>
        <dbReference type="ChEBI" id="CHEBI:18420"/>
    </cofactor>
    <text evidence="1">Binds 1 Mg(2+) ion per subunit.</text>
</comment>
<comment type="pathway">
    <text evidence="1">Nucleotide-sugar biosynthesis; UDP-N-acetyl-alpha-D-glucosamine biosynthesis; N-acetyl-alpha-D-glucosamine 1-phosphate from alpha-D-glucosamine 6-phosphate (route II): step 2/2.</text>
</comment>
<comment type="pathway">
    <text evidence="1">Nucleotide-sugar biosynthesis; UDP-N-acetyl-alpha-D-glucosamine biosynthesis; UDP-N-acetyl-alpha-D-glucosamine from N-acetyl-alpha-D-glucosamine 1-phosphate: step 1/1.</text>
</comment>
<comment type="pathway">
    <text evidence="1">Bacterial outer membrane biogenesis; LPS lipid A biosynthesis.</text>
</comment>
<comment type="subunit">
    <text evidence="1">Homotrimer.</text>
</comment>
<comment type="subcellular location">
    <subcellularLocation>
        <location evidence="1">Cytoplasm</location>
    </subcellularLocation>
</comment>
<comment type="similarity">
    <text evidence="1">In the N-terminal section; belongs to the N-acetylglucosamine-1-phosphate uridyltransferase family.</text>
</comment>
<comment type="similarity">
    <text evidence="1">In the C-terminal section; belongs to the transferase hexapeptide repeat family.</text>
</comment>
<keyword id="KW-0012">Acyltransferase</keyword>
<keyword id="KW-0133">Cell shape</keyword>
<keyword id="KW-0961">Cell wall biogenesis/degradation</keyword>
<keyword id="KW-0963">Cytoplasm</keyword>
<keyword id="KW-0460">Magnesium</keyword>
<keyword id="KW-0479">Metal-binding</keyword>
<keyword id="KW-0511">Multifunctional enzyme</keyword>
<keyword id="KW-0548">Nucleotidyltransferase</keyword>
<keyword id="KW-0573">Peptidoglycan synthesis</keyword>
<keyword id="KW-1185">Reference proteome</keyword>
<keyword id="KW-0677">Repeat</keyword>
<keyword id="KW-0808">Transferase</keyword>
<name>GLMU_LATSS</name>
<reference key="1">
    <citation type="journal article" date="2005" name="Nat. Biotechnol.">
        <title>The complete genome sequence of the meat-borne lactic acid bacterium Lactobacillus sakei 23K.</title>
        <authorList>
            <person name="Chaillou S."/>
            <person name="Champomier-Verges M.-C."/>
            <person name="Cornet M."/>
            <person name="Crutz-Le Coq A.-M."/>
            <person name="Dudez A.-M."/>
            <person name="Martin V."/>
            <person name="Beaufils S."/>
            <person name="Darbon-Rongere E."/>
            <person name="Bossy R."/>
            <person name="Loux V."/>
            <person name="Zagorec M."/>
        </authorList>
    </citation>
    <scope>NUCLEOTIDE SEQUENCE [LARGE SCALE GENOMIC DNA]</scope>
    <source>
        <strain>23K</strain>
    </source>
</reference>
<proteinExistence type="inferred from homology"/>
<protein>
    <recommendedName>
        <fullName evidence="1">Bifunctional protein GlmU</fullName>
    </recommendedName>
    <domain>
        <recommendedName>
            <fullName evidence="1">UDP-N-acetylglucosamine pyrophosphorylase</fullName>
            <ecNumber evidence="1">2.7.7.23</ecNumber>
        </recommendedName>
        <alternativeName>
            <fullName evidence="1">N-acetylglucosamine-1-phosphate uridyltransferase</fullName>
        </alternativeName>
    </domain>
    <domain>
        <recommendedName>
            <fullName evidence="1">Glucosamine-1-phosphate N-acetyltransferase</fullName>
            <ecNumber evidence="1">2.3.1.157</ecNumber>
        </recommendedName>
    </domain>
</protein>
<feature type="chain" id="PRO_0000233788" description="Bifunctional protein GlmU">
    <location>
        <begin position="1"/>
        <end position="462"/>
    </location>
</feature>
<feature type="region of interest" description="Pyrophosphorylase" evidence="1">
    <location>
        <begin position="1"/>
        <end position="230"/>
    </location>
</feature>
<feature type="region of interest" description="Linker" evidence="1">
    <location>
        <begin position="231"/>
        <end position="251"/>
    </location>
</feature>
<feature type="region of interest" description="N-acetyltransferase" evidence="1">
    <location>
        <begin position="252"/>
        <end position="462"/>
    </location>
</feature>
<feature type="active site" description="Proton acceptor" evidence="1">
    <location>
        <position position="363"/>
    </location>
</feature>
<feature type="binding site" evidence="1">
    <location>
        <begin position="9"/>
        <end position="12"/>
    </location>
    <ligand>
        <name>UDP-N-acetyl-alpha-D-glucosamine</name>
        <dbReference type="ChEBI" id="CHEBI:57705"/>
    </ligand>
</feature>
<feature type="binding site" evidence="1">
    <location>
        <position position="23"/>
    </location>
    <ligand>
        <name>UDP-N-acetyl-alpha-D-glucosamine</name>
        <dbReference type="ChEBI" id="CHEBI:57705"/>
    </ligand>
</feature>
<feature type="binding site" evidence="1">
    <location>
        <position position="73"/>
    </location>
    <ligand>
        <name>UDP-N-acetyl-alpha-D-glucosamine</name>
        <dbReference type="ChEBI" id="CHEBI:57705"/>
    </ligand>
</feature>
<feature type="binding site" evidence="1">
    <location>
        <begin position="78"/>
        <end position="79"/>
    </location>
    <ligand>
        <name>UDP-N-acetyl-alpha-D-glucosamine</name>
        <dbReference type="ChEBI" id="CHEBI:57705"/>
    </ligand>
</feature>
<feature type="binding site" evidence="1">
    <location>
        <begin position="101"/>
        <end position="103"/>
    </location>
    <ligand>
        <name>UDP-N-acetyl-alpha-D-glucosamine</name>
        <dbReference type="ChEBI" id="CHEBI:57705"/>
    </ligand>
</feature>
<feature type="binding site" evidence="1">
    <location>
        <position position="103"/>
    </location>
    <ligand>
        <name>Mg(2+)</name>
        <dbReference type="ChEBI" id="CHEBI:18420"/>
    </ligand>
</feature>
<feature type="binding site" evidence="1">
    <location>
        <position position="140"/>
    </location>
    <ligand>
        <name>UDP-N-acetyl-alpha-D-glucosamine</name>
        <dbReference type="ChEBI" id="CHEBI:57705"/>
    </ligand>
</feature>
<feature type="binding site" evidence="1">
    <location>
        <position position="155"/>
    </location>
    <ligand>
        <name>UDP-N-acetyl-alpha-D-glucosamine</name>
        <dbReference type="ChEBI" id="CHEBI:57705"/>
    </ligand>
</feature>
<feature type="binding site" evidence="1">
    <location>
        <position position="170"/>
    </location>
    <ligand>
        <name>UDP-N-acetyl-alpha-D-glucosamine</name>
        <dbReference type="ChEBI" id="CHEBI:57705"/>
    </ligand>
</feature>
<feature type="binding site" evidence="1">
    <location>
        <position position="228"/>
    </location>
    <ligand>
        <name>Mg(2+)</name>
        <dbReference type="ChEBI" id="CHEBI:18420"/>
    </ligand>
</feature>
<feature type="binding site" evidence="1">
    <location>
        <position position="228"/>
    </location>
    <ligand>
        <name>UDP-N-acetyl-alpha-D-glucosamine</name>
        <dbReference type="ChEBI" id="CHEBI:57705"/>
    </ligand>
</feature>
<feature type="binding site" evidence="1">
    <location>
        <position position="333"/>
    </location>
    <ligand>
        <name>UDP-N-acetyl-alpha-D-glucosamine</name>
        <dbReference type="ChEBI" id="CHEBI:57705"/>
    </ligand>
</feature>
<feature type="binding site" evidence="1">
    <location>
        <position position="351"/>
    </location>
    <ligand>
        <name>UDP-N-acetyl-alpha-D-glucosamine</name>
        <dbReference type="ChEBI" id="CHEBI:57705"/>
    </ligand>
</feature>
<feature type="binding site" evidence="1">
    <location>
        <position position="366"/>
    </location>
    <ligand>
        <name>UDP-N-acetyl-alpha-D-glucosamine</name>
        <dbReference type="ChEBI" id="CHEBI:57705"/>
    </ligand>
</feature>
<feature type="binding site" evidence="1">
    <location>
        <position position="377"/>
    </location>
    <ligand>
        <name>UDP-N-acetyl-alpha-D-glucosamine</name>
        <dbReference type="ChEBI" id="CHEBI:57705"/>
    </ligand>
</feature>
<feature type="binding site" evidence="1">
    <location>
        <begin position="386"/>
        <end position="387"/>
    </location>
    <ligand>
        <name>acetyl-CoA</name>
        <dbReference type="ChEBI" id="CHEBI:57288"/>
    </ligand>
</feature>
<feature type="binding site" evidence="1">
    <location>
        <position position="405"/>
    </location>
    <ligand>
        <name>acetyl-CoA</name>
        <dbReference type="ChEBI" id="CHEBI:57288"/>
    </ligand>
</feature>
<feature type="binding site" evidence="1">
    <location>
        <position position="423"/>
    </location>
    <ligand>
        <name>acetyl-CoA</name>
        <dbReference type="ChEBI" id="CHEBI:57288"/>
    </ligand>
</feature>
<feature type="binding site" evidence="1">
    <location>
        <position position="440"/>
    </location>
    <ligand>
        <name>acetyl-CoA</name>
        <dbReference type="ChEBI" id="CHEBI:57288"/>
    </ligand>
</feature>
<sequence>MVNKNAIILAAGKGTRMKSKLYKVLHEVCGRPMVDHVLTEVEKTEPATVVTIVGHGAEKVKDYLGDRSQYALQAEQLGTGHAVLQAEDLLKDQDGITIVVSGDTPLLTAGTFEKLFAYHHDKGAKATILTATAPDPTGYGRIIRNDIGIVEKIVEQKDTNDKEAAVNEINTGVYCFDNKTLFQALHEVTNENAQGEYYLTDVVEILKKKGEIVAAYKMPNFEESMGVNDRVALSQATKVMRQRINTAHMRNGVTLIDPESTYIEVGVKIGNDTIIEPNVVLKGNTTIGSDCFVGAGSTIIDSTIEDNIQITSSTIESAIMHTGSNIGPNSHLRPNAEIGVDVHVGNFCEVKNAKIGDRTKIGHLSYVGDATLGTDINVGCGVVFVNYDGVAKHHANVGSHVFIGSNSNIVAPVEIADHTFIAAGSTITDDVPEKAMAIARARQTNKENYWAKLPVAKDEEWQ</sequence>
<dbReference type="EC" id="2.7.7.23" evidence="1"/>
<dbReference type="EC" id="2.3.1.157" evidence="1"/>
<dbReference type="EMBL" id="CR936503">
    <property type="protein sequence ID" value="CAI55955.1"/>
    <property type="molecule type" value="Genomic_DNA"/>
</dbReference>
<dbReference type="RefSeq" id="WP_011375340.1">
    <property type="nucleotide sequence ID" value="NC_007576.1"/>
</dbReference>
<dbReference type="SMR" id="Q38V29"/>
<dbReference type="STRING" id="314315.LCA_1648"/>
<dbReference type="KEGG" id="lsa:LCA_1648"/>
<dbReference type="eggNOG" id="COG1207">
    <property type="taxonomic scope" value="Bacteria"/>
</dbReference>
<dbReference type="HOGENOM" id="CLU_029499_15_2_9"/>
<dbReference type="OrthoDB" id="9775031at2"/>
<dbReference type="UniPathway" id="UPA00113">
    <property type="reaction ID" value="UER00532"/>
</dbReference>
<dbReference type="UniPathway" id="UPA00113">
    <property type="reaction ID" value="UER00533"/>
</dbReference>
<dbReference type="UniPathway" id="UPA00973"/>
<dbReference type="Proteomes" id="UP000002707">
    <property type="component" value="Chromosome"/>
</dbReference>
<dbReference type="GO" id="GO:0005737">
    <property type="term" value="C:cytoplasm"/>
    <property type="evidence" value="ECO:0007669"/>
    <property type="project" value="UniProtKB-SubCell"/>
</dbReference>
<dbReference type="GO" id="GO:0016020">
    <property type="term" value="C:membrane"/>
    <property type="evidence" value="ECO:0007669"/>
    <property type="project" value="GOC"/>
</dbReference>
<dbReference type="GO" id="GO:0019134">
    <property type="term" value="F:glucosamine-1-phosphate N-acetyltransferase activity"/>
    <property type="evidence" value="ECO:0007669"/>
    <property type="project" value="UniProtKB-UniRule"/>
</dbReference>
<dbReference type="GO" id="GO:0000287">
    <property type="term" value="F:magnesium ion binding"/>
    <property type="evidence" value="ECO:0007669"/>
    <property type="project" value="UniProtKB-UniRule"/>
</dbReference>
<dbReference type="GO" id="GO:0003977">
    <property type="term" value="F:UDP-N-acetylglucosamine diphosphorylase activity"/>
    <property type="evidence" value="ECO:0007669"/>
    <property type="project" value="UniProtKB-UniRule"/>
</dbReference>
<dbReference type="GO" id="GO:0000902">
    <property type="term" value="P:cell morphogenesis"/>
    <property type="evidence" value="ECO:0007669"/>
    <property type="project" value="UniProtKB-UniRule"/>
</dbReference>
<dbReference type="GO" id="GO:0071555">
    <property type="term" value="P:cell wall organization"/>
    <property type="evidence" value="ECO:0007669"/>
    <property type="project" value="UniProtKB-KW"/>
</dbReference>
<dbReference type="GO" id="GO:0009245">
    <property type="term" value="P:lipid A biosynthetic process"/>
    <property type="evidence" value="ECO:0007669"/>
    <property type="project" value="UniProtKB-UniRule"/>
</dbReference>
<dbReference type="GO" id="GO:0009252">
    <property type="term" value="P:peptidoglycan biosynthetic process"/>
    <property type="evidence" value="ECO:0007669"/>
    <property type="project" value="UniProtKB-UniRule"/>
</dbReference>
<dbReference type="GO" id="GO:0008360">
    <property type="term" value="P:regulation of cell shape"/>
    <property type="evidence" value="ECO:0007669"/>
    <property type="project" value="UniProtKB-KW"/>
</dbReference>
<dbReference type="GO" id="GO:0006048">
    <property type="term" value="P:UDP-N-acetylglucosamine biosynthetic process"/>
    <property type="evidence" value="ECO:0007669"/>
    <property type="project" value="UniProtKB-UniPathway"/>
</dbReference>
<dbReference type="CDD" id="cd02540">
    <property type="entry name" value="GT2_GlmU_N_bac"/>
    <property type="match status" value="1"/>
</dbReference>
<dbReference type="CDD" id="cd03353">
    <property type="entry name" value="LbH_GlmU_C"/>
    <property type="match status" value="1"/>
</dbReference>
<dbReference type="Gene3D" id="2.160.10.10">
    <property type="entry name" value="Hexapeptide repeat proteins"/>
    <property type="match status" value="1"/>
</dbReference>
<dbReference type="Gene3D" id="3.90.550.10">
    <property type="entry name" value="Spore Coat Polysaccharide Biosynthesis Protein SpsA, Chain A"/>
    <property type="match status" value="1"/>
</dbReference>
<dbReference type="HAMAP" id="MF_01631">
    <property type="entry name" value="GlmU"/>
    <property type="match status" value="1"/>
</dbReference>
<dbReference type="InterPro" id="IPR005882">
    <property type="entry name" value="Bifunctional_GlmU"/>
</dbReference>
<dbReference type="InterPro" id="IPR050065">
    <property type="entry name" value="GlmU-like"/>
</dbReference>
<dbReference type="InterPro" id="IPR038009">
    <property type="entry name" value="GlmU_C_LbH"/>
</dbReference>
<dbReference type="InterPro" id="IPR001451">
    <property type="entry name" value="Hexapep"/>
</dbReference>
<dbReference type="InterPro" id="IPR018357">
    <property type="entry name" value="Hexapep_transf_CS"/>
</dbReference>
<dbReference type="InterPro" id="IPR005835">
    <property type="entry name" value="NTP_transferase_dom"/>
</dbReference>
<dbReference type="InterPro" id="IPR029044">
    <property type="entry name" value="Nucleotide-diphossugar_trans"/>
</dbReference>
<dbReference type="InterPro" id="IPR011004">
    <property type="entry name" value="Trimer_LpxA-like_sf"/>
</dbReference>
<dbReference type="NCBIfam" id="TIGR01173">
    <property type="entry name" value="glmU"/>
    <property type="match status" value="1"/>
</dbReference>
<dbReference type="NCBIfam" id="NF010934">
    <property type="entry name" value="PRK14354.1"/>
    <property type="match status" value="1"/>
</dbReference>
<dbReference type="PANTHER" id="PTHR43584:SF3">
    <property type="entry name" value="BIFUNCTIONAL PROTEIN GLMU"/>
    <property type="match status" value="1"/>
</dbReference>
<dbReference type="PANTHER" id="PTHR43584">
    <property type="entry name" value="NUCLEOTIDYL TRANSFERASE"/>
    <property type="match status" value="1"/>
</dbReference>
<dbReference type="Pfam" id="PF00132">
    <property type="entry name" value="Hexapep"/>
    <property type="match status" value="2"/>
</dbReference>
<dbReference type="Pfam" id="PF00483">
    <property type="entry name" value="NTP_transferase"/>
    <property type="match status" value="1"/>
</dbReference>
<dbReference type="SUPFAM" id="SSF53448">
    <property type="entry name" value="Nucleotide-diphospho-sugar transferases"/>
    <property type="match status" value="1"/>
</dbReference>
<dbReference type="SUPFAM" id="SSF51161">
    <property type="entry name" value="Trimeric LpxA-like enzymes"/>
    <property type="match status" value="1"/>
</dbReference>
<dbReference type="PROSITE" id="PS00101">
    <property type="entry name" value="HEXAPEP_TRANSFERASES"/>
    <property type="match status" value="1"/>
</dbReference>
<organism>
    <name type="scientific">Latilactobacillus sakei subsp. sakei (strain 23K)</name>
    <name type="common">Lactobacillus sakei subsp. sakei</name>
    <dbReference type="NCBI Taxonomy" id="314315"/>
    <lineage>
        <taxon>Bacteria</taxon>
        <taxon>Bacillati</taxon>
        <taxon>Bacillota</taxon>
        <taxon>Bacilli</taxon>
        <taxon>Lactobacillales</taxon>
        <taxon>Lactobacillaceae</taxon>
        <taxon>Latilactobacillus</taxon>
    </lineage>
</organism>
<gene>
    <name evidence="1" type="primary">glmU</name>
    <name type="ordered locus">LCA_1648</name>
</gene>
<evidence type="ECO:0000255" key="1">
    <source>
        <dbReference type="HAMAP-Rule" id="MF_01631"/>
    </source>
</evidence>
<accession>Q38V29</accession>